<dbReference type="EC" id="6.3.2.1" evidence="1"/>
<dbReference type="EMBL" id="CP000518">
    <property type="protein sequence ID" value="ABL94038.1"/>
    <property type="molecule type" value="Genomic_DNA"/>
</dbReference>
<dbReference type="SMR" id="A1UMI0"/>
<dbReference type="STRING" id="189918.Mkms_4848"/>
<dbReference type="KEGG" id="mkm:Mkms_4848"/>
<dbReference type="HOGENOM" id="CLU_047148_0_1_11"/>
<dbReference type="OrthoDB" id="9773087at2"/>
<dbReference type="UniPathway" id="UPA00028">
    <property type="reaction ID" value="UER00005"/>
</dbReference>
<dbReference type="GO" id="GO:0005829">
    <property type="term" value="C:cytosol"/>
    <property type="evidence" value="ECO:0007669"/>
    <property type="project" value="TreeGrafter"/>
</dbReference>
<dbReference type="GO" id="GO:0005524">
    <property type="term" value="F:ATP binding"/>
    <property type="evidence" value="ECO:0007669"/>
    <property type="project" value="UniProtKB-KW"/>
</dbReference>
<dbReference type="GO" id="GO:0004592">
    <property type="term" value="F:pantoate-beta-alanine ligase activity"/>
    <property type="evidence" value="ECO:0007669"/>
    <property type="project" value="UniProtKB-UniRule"/>
</dbReference>
<dbReference type="GO" id="GO:0015940">
    <property type="term" value="P:pantothenate biosynthetic process"/>
    <property type="evidence" value="ECO:0007669"/>
    <property type="project" value="UniProtKB-UniRule"/>
</dbReference>
<dbReference type="CDD" id="cd00560">
    <property type="entry name" value="PanC"/>
    <property type="match status" value="1"/>
</dbReference>
<dbReference type="FunFam" id="3.40.50.620:FF:000114">
    <property type="entry name" value="Pantothenate synthetase"/>
    <property type="match status" value="1"/>
</dbReference>
<dbReference type="Gene3D" id="3.40.50.620">
    <property type="entry name" value="HUPs"/>
    <property type="match status" value="1"/>
</dbReference>
<dbReference type="Gene3D" id="3.30.1300.10">
    <property type="entry name" value="Pantoate-beta-alanine ligase, C-terminal domain"/>
    <property type="match status" value="1"/>
</dbReference>
<dbReference type="HAMAP" id="MF_00158">
    <property type="entry name" value="PanC"/>
    <property type="match status" value="1"/>
</dbReference>
<dbReference type="InterPro" id="IPR003721">
    <property type="entry name" value="Pantoate_ligase"/>
</dbReference>
<dbReference type="InterPro" id="IPR042176">
    <property type="entry name" value="Pantoate_ligase_C"/>
</dbReference>
<dbReference type="InterPro" id="IPR014729">
    <property type="entry name" value="Rossmann-like_a/b/a_fold"/>
</dbReference>
<dbReference type="NCBIfam" id="TIGR00018">
    <property type="entry name" value="panC"/>
    <property type="match status" value="1"/>
</dbReference>
<dbReference type="PANTHER" id="PTHR21299">
    <property type="entry name" value="CYTIDYLATE KINASE/PANTOATE-BETA-ALANINE LIGASE"/>
    <property type="match status" value="1"/>
</dbReference>
<dbReference type="PANTHER" id="PTHR21299:SF1">
    <property type="entry name" value="PANTOATE--BETA-ALANINE LIGASE"/>
    <property type="match status" value="1"/>
</dbReference>
<dbReference type="Pfam" id="PF02569">
    <property type="entry name" value="Pantoate_ligase"/>
    <property type="match status" value="1"/>
</dbReference>
<dbReference type="SUPFAM" id="SSF52374">
    <property type="entry name" value="Nucleotidylyl transferase"/>
    <property type="match status" value="1"/>
</dbReference>
<protein>
    <recommendedName>
        <fullName evidence="1">Pantothenate synthetase</fullName>
        <shortName evidence="1">PS</shortName>
        <ecNumber evidence="1">6.3.2.1</ecNumber>
    </recommendedName>
    <alternativeName>
        <fullName evidence="1">Pantoate--beta-alanine ligase</fullName>
    </alternativeName>
    <alternativeName>
        <fullName evidence="1">Pantoate-activating enzyme</fullName>
    </alternativeName>
</protein>
<feature type="chain" id="PRO_0000305489" description="Pantothenate synthetase">
    <location>
        <begin position="1"/>
        <end position="313"/>
    </location>
</feature>
<feature type="active site" description="Proton donor" evidence="1">
    <location>
        <position position="50"/>
    </location>
</feature>
<feature type="binding site" evidence="1">
    <location>
        <begin position="43"/>
        <end position="50"/>
    </location>
    <ligand>
        <name>ATP</name>
        <dbReference type="ChEBI" id="CHEBI:30616"/>
    </ligand>
</feature>
<feature type="binding site" evidence="1">
    <location>
        <position position="75"/>
    </location>
    <ligand>
        <name>(R)-pantoate</name>
        <dbReference type="ChEBI" id="CHEBI:15980"/>
    </ligand>
</feature>
<feature type="binding site" evidence="1">
    <location>
        <position position="75"/>
    </location>
    <ligand>
        <name>beta-alanine</name>
        <dbReference type="ChEBI" id="CHEBI:57966"/>
    </ligand>
</feature>
<feature type="binding site" evidence="1">
    <location>
        <begin position="161"/>
        <end position="164"/>
    </location>
    <ligand>
        <name>ATP</name>
        <dbReference type="ChEBI" id="CHEBI:30616"/>
    </ligand>
</feature>
<feature type="binding site" evidence="1">
    <location>
        <position position="167"/>
    </location>
    <ligand>
        <name>(R)-pantoate</name>
        <dbReference type="ChEBI" id="CHEBI:15980"/>
    </ligand>
</feature>
<feature type="binding site" evidence="1">
    <location>
        <position position="190"/>
    </location>
    <ligand>
        <name>ATP</name>
        <dbReference type="ChEBI" id="CHEBI:30616"/>
    </ligand>
</feature>
<feature type="binding site" evidence="1">
    <location>
        <begin position="198"/>
        <end position="201"/>
    </location>
    <ligand>
        <name>ATP</name>
        <dbReference type="ChEBI" id="CHEBI:30616"/>
    </ligand>
</feature>
<evidence type="ECO:0000255" key="1">
    <source>
        <dbReference type="HAMAP-Rule" id="MF_00158"/>
    </source>
</evidence>
<proteinExistence type="inferred from homology"/>
<organism>
    <name type="scientific">Mycobacterium sp. (strain KMS)</name>
    <dbReference type="NCBI Taxonomy" id="189918"/>
    <lineage>
        <taxon>Bacteria</taxon>
        <taxon>Bacillati</taxon>
        <taxon>Actinomycetota</taxon>
        <taxon>Actinomycetes</taxon>
        <taxon>Mycobacteriales</taxon>
        <taxon>Mycobacteriaceae</taxon>
        <taxon>Mycobacterium</taxon>
    </lineage>
</organism>
<comment type="function">
    <text evidence="1">Catalyzes the condensation of pantoate with beta-alanine in an ATP-dependent reaction via a pantoyl-adenylate intermediate.</text>
</comment>
<comment type="catalytic activity">
    <reaction evidence="1">
        <text>(R)-pantoate + beta-alanine + ATP = (R)-pantothenate + AMP + diphosphate + H(+)</text>
        <dbReference type="Rhea" id="RHEA:10912"/>
        <dbReference type="ChEBI" id="CHEBI:15378"/>
        <dbReference type="ChEBI" id="CHEBI:15980"/>
        <dbReference type="ChEBI" id="CHEBI:29032"/>
        <dbReference type="ChEBI" id="CHEBI:30616"/>
        <dbReference type="ChEBI" id="CHEBI:33019"/>
        <dbReference type="ChEBI" id="CHEBI:57966"/>
        <dbReference type="ChEBI" id="CHEBI:456215"/>
        <dbReference type="EC" id="6.3.2.1"/>
    </reaction>
</comment>
<comment type="pathway">
    <text evidence="1">Cofactor biosynthesis; (R)-pantothenate biosynthesis; (R)-pantothenate from (R)-pantoate and beta-alanine: step 1/1.</text>
</comment>
<comment type="subunit">
    <text evidence="1">Homodimer.</text>
</comment>
<comment type="subcellular location">
    <subcellularLocation>
        <location evidence="1">Cytoplasm</location>
    </subcellularLocation>
</comment>
<comment type="miscellaneous">
    <text evidence="1">The reaction proceeds by a bi uni uni bi ping pong mechanism.</text>
</comment>
<comment type="similarity">
    <text evidence="1">Belongs to the pantothenate synthetase family.</text>
</comment>
<accession>A1UMI0</accession>
<reference key="1">
    <citation type="submission" date="2006-12" db="EMBL/GenBank/DDBJ databases">
        <title>Complete sequence of chromosome of Mycobacterium sp. KMS.</title>
        <authorList>
            <consortium name="US DOE Joint Genome Institute"/>
            <person name="Copeland A."/>
            <person name="Lucas S."/>
            <person name="Lapidus A."/>
            <person name="Barry K."/>
            <person name="Detter J.C."/>
            <person name="Glavina del Rio T."/>
            <person name="Hammon N."/>
            <person name="Israni S."/>
            <person name="Dalin E."/>
            <person name="Tice H."/>
            <person name="Pitluck S."/>
            <person name="Kiss H."/>
            <person name="Brettin T."/>
            <person name="Bruce D."/>
            <person name="Han C."/>
            <person name="Tapia R."/>
            <person name="Gilna P."/>
            <person name="Schmutz J."/>
            <person name="Larimer F."/>
            <person name="Land M."/>
            <person name="Hauser L."/>
            <person name="Kyrpides N."/>
            <person name="Mikhailova N."/>
            <person name="Miller C.D."/>
            <person name="Richardson P."/>
        </authorList>
    </citation>
    <scope>NUCLEOTIDE SEQUENCE [LARGE SCALE GENOMIC DNA]</scope>
    <source>
        <strain>KMS</strain>
    </source>
</reference>
<keyword id="KW-0067">ATP-binding</keyword>
<keyword id="KW-0963">Cytoplasm</keyword>
<keyword id="KW-0436">Ligase</keyword>
<keyword id="KW-0547">Nucleotide-binding</keyword>
<keyword id="KW-0566">Pantothenate biosynthesis</keyword>
<gene>
    <name evidence="1" type="primary">panC</name>
    <name type="ordered locus">Mkms_4848</name>
</gene>
<name>PANC_MYCSK</name>
<sequence length="313" mass="33668">MTARRPTRFAKGELNVYRAPRDVTDVTRALRSTGRRVVLVPTMGALHEGHLTLIRAAKRVQGAVVVVSIFVNPLQFGAGEDLDAYPRTLDDDLAALRAEGVEIAFTPTVGDMYPDGTRTSVHPGPLGDDLEGASRPGHFAGVLTVVCKLLHIVRPDRAFFGEKDYQQLVLIRQMVTDLNIDTKIVGVPTVREADGLALSSRNRYLDEVEREQAGALSAALLAGMYAASNGAAATLDAARAVLDEVPAIEVDYLQVRDPMLGPVPHEGAARLLVAARLGQTRLLDNIAVDIGASDGIDGHPRVGSPDHQLPWRN</sequence>